<feature type="chain" id="PRO_1000194857" description="Regulator of ribonuclease activity A">
    <location>
        <begin position="1"/>
        <end position="161"/>
    </location>
</feature>
<proteinExistence type="inferred from homology"/>
<keyword id="KW-0963">Cytoplasm</keyword>
<dbReference type="EMBL" id="CP001164">
    <property type="protein sequence ID" value="ACI35951.1"/>
    <property type="molecule type" value="Genomic_DNA"/>
</dbReference>
<dbReference type="RefSeq" id="WP_000872908.1">
    <property type="nucleotide sequence ID" value="NC_011353.1"/>
</dbReference>
<dbReference type="SMR" id="B5YZ69"/>
<dbReference type="GeneID" id="93777969"/>
<dbReference type="KEGG" id="ecf:ECH74115_5386"/>
<dbReference type="HOGENOM" id="CLU_072626_4_0_6"/>
<dbReference type="GO" id="GO:0005829">
    <property type="term" value="C:cytosol"/>
    <property type="evidence" value="ECO:0007669"/>
    <property type="project" value="TreeGrafter"/>
</dbReference>
<dbReference type="GO" id="GO:0060698">
    <property type="term" value="F:endoribonuclease inhibitor activity"/>
    <property type="evidence" value="ECO:0007669"/>
    <property type="project" value="UniProtKB-UniRule"/>
</dbReference>
<dbReference type="GO" id="GO:0019899">
    <property type="term" value="F:enzyme binding"/>
    <property type="evidence" value="ECO:0007669"/>
    <property type="project" value="UniProtKB-UniRule"/>
</dbReference>
<dbReference type="GO" id="GO:1902369">
    <property type="term" value="P:negative regulation of RNA catabolic process"/>
    <property type="evidence" value="ECO:0007669"/>
    <property type="project" value="TreeGrafter"/>
</dbReference>
<dbReference type="CDD" id="cd16841">
    <property type="entry name" value="RraA_family"/>
    <property type="match status" value="1"/>
</dbReference>
<dbReference type="FunFam" id="3.50.30.40:FF:000001">
    <property type="entry name" value="Regulator of ribonuclease activity A"/>
    <property type="match status" value="1"/>
</dbReference>
<dbReference type="Gene3D" id="3.50.30.40">
    <property type="entry name" value="Ribonuclease E inhibitor RraA/RraA-like"/>
    <property type="match status" value="1"/>
</dbReference>
<dbReference type="HAMAP" id="MF_00471">
    <property type="entry name" value="RraA"/>
    <property type="match status" value="1"/>
</dbReference>
<dbReference type="InterPro" id="IPR010203">
    <property type="entry name" value="RraA"/>
</dbReference>
<dbReference type="InterPro" id="IPR005493">
    <property type="entry name" value="RraA/RraA-like"/>
</dbReference>
<dbReference type="InterPro" id="IPR036704">
    <property type="entry name" value="RraA/RraA-like_sf"/>
</dbReference>
<dbReference type="InterPro" id="IPR014339">
    <property type="entry name" value="RraA_gpbac"/>
</dbReference>
<dbReference type="NCBIfam" id="TIGR01935">
    <property type="entry name" value="NOT-MenG"/>
    <property type="match status" value="1"/>
</dbReference>
<dbReference type="NCBIfam" id="NF006875">
    <property type="entry name" value="PRK09372.1"/>
    <property type="match status" value="1"/>
</dbReference>
<dbReference type="NCBIfam" id="TIGR02998">
    <property type="entry name" value="RraA_entero"/>
    <property type="match status" value="1"/>
</dbReference>
<dbReference type="PANTHER" id="PTHR33254">
    <property type="entry name" value="4-HYDROXY-4-METHYL-2-OXOGLUTARATE ALDOLASE 3-RELATED"/>
    <property type="match status" value="1"/>
</dbReference>
<dbReference type="PANTHER" id="PTHR33254:SF29">
    <property type="entry name" value="REGULATOR OF RIBONUCLEASE ACTIVITY A"/>
    <property type="match status" value="1"/>
</dbReference>
<dbReference type="Pfam" id="PF03737">
    <property type="entry name" value="RraA-like"/>
    <property type="match status" value="1"/>
</dbReference>
<dbReference type="SUPFAM" id="SSF89562">
    <property type="entry name" value="RraA-like"/>
    <property type="match status" value="1"/>
</dbReference>
<reference key="1">
    <citation type="journal article" date="2011" name="Proc. Natl. Acad. Sci. U.S.A.">
        <title>Genomic anatomy of Escherichia coli O157:H7 outbreaks.</title>
        <authorList>
            <person name="Eppinger M."/>
            <person name="Mammel M.K."/>
            <person name="Leclerc J.E."/>
            <person name="Ravel J."/>
            <person name="Cebula T.A."/>
        </authorList>
    </citation>
    <scope>NUCLEOTIDE SEQUENCE [LARGE SCALE GENOMIC DNA]</scope>
    <source>
        <strain>EC4115 / EHEC</strain>
    </source>
</reference>
<name>RRAA_ECO5E</name>
<evidence type="ECO:0000255" key="1">
    <source>
        <dbReference type="HAMAP-Rule" id="MF_00471"/>
    </source>
</evidence>
<comment type="function">
    <text evidence="1">Globally modulates RNA abundance by binding to RNase E (Rne) and regulating its endonucleolytic activity. Can modulate Rne action in a substrate-dependent manner by altering the composition of the degradosome. Modulates RNA-binding and helicase activities of the degradosome.</text>
</comment>
<comment type="subunit">
    <text evidence="1">Homotrimer. Binds to both RNA-binding sites in the C-terminal region of Rne and to RhlB.</text>
</comment>
<comment type="subcellular location">
    <subcellularLocation>
        <location evidence="1">Cytoplasm</location>
    </subcellularLocation>
</comment>
<comment type="similarity">
    <text evidence="1">Belongs to the RraA family.</text>
</comment>
<sequence length="161" mass="17360">MKYDTSELCDIYQEDVNVVEPLFSNFGGRASFGGQIITVKCFEDNGLLYDLLEQNGRGRVLVVDGGGSVRRALVDAELARLAVQNEWEGLVIYGAVRQVDDLEELDIGIQAMAAIPVGAAGEGIGESDVRVNFGGVTFFSGDHLYADNTGIILSEDPLDIE</sequence>
<protein>
    <recommendedName>
        <fullName evidence="1">Regulator of ribonuclease activity A</fullName>
    </recommendedName>
</protein>
<gene>
    <name evidence="1" type="primary">rraA</name>
    <name type="ordered locus">ECH74115_5386</name>
</gene>
<organism>
    <name type="scientific">Escherichia coli O157:H7 (strain EC4115 / EHEC)</name>
    <dbReference type="NCBI Taxonomy" id="444450"/>
    <lineage>
        <taxon>Bacteria</taxon>
        <taxon>Pseudomonadati</taxon>
        <taxon>Pseudomonadota</taxon>
        <taxon>Gammaproteobacteria</taxon>
        <taxon>Enterobacterales</taxon>
        <taxon>Enterobacteriaceae</taxon>
        <taxon>Escherichia</taxon>
    </lineage>
</organism>
<accession>B5YZ69</accession>